<gene>
    <name type="primary">Tnfrsf13c</name>
    <name type="synonym">Baffr</name>
    <name type="synonym">Bcmd</name>
    <name type="synonym">Br3</name>
</gene>
<name>TR13C_MOUSE</name>
<comment type="function">
    <text evidence="5">B-cell receptor specific for TNFSF13B/TALL1/BAFF/BLyS. Promotes the survival of mature B-cells and the B-cell response.</text>
</comment>
<comment type="subcellular location">
    <subcellularLocation>
        <location evidence="7">Membrane</location>
        <topology evidence="7">Single-pass type III membrane protein</topology>
    </subcellularLocation>
</comment>
<comment type="alternative products">
    <event type="alternative splicing"/>
    <isoform>
        <id>Q9D8D0-1</id>
        <name>1</name>
        <sequence type="displayed"/>
    </isoform>
    <isoform>
        <id>Q9D8D0-2</id>
        <name>2</name>
        <sequence type="described" ref="VSP_006506"/>
    </isoform>
</comment>
<comment type="tissue specificity">
    <text>Highly expressed in spleen and testis; detected at lower levels in lung and thymus.</text>
</comment>
<comment type="disease">
    <text evidence="4">Defects in Tnfrsf13c are a cause of severe B-cell deficiency. B-cell deficient strain A/WySnJ has a 4.7 kb insertion in the BAFFR gene leading to an altered C-terminus. The mutant RNA is not detectable. B-cell lymphopoiesis is normal, but the life span of peripheral B-cells is much reduced.</text>
</comment>
<reference key="1">
    <citation type="journal article" date="2001" name="Science">
        <title>BAFF-R, a newly identified TNF receptor that specifically interacts with BAFF.</title>
        <authorList>
            <person name="Thompson J.S."/>
            <person name="Bixler S.A."/>
            <person name="Qian F."/>
            <person name="Vora K."/>
            <person name="Scott M.L."/>
            <person name="Cachero T.G."/>
            <person name="Hession C."/>
            <person name="Schneider P."/>
            <person name="Sizing I.D."/>
            <person name="Mullen C."/>
            <person name="Strauch K."/>
            <person name="Zafari M."/>
            <person name="Benjamin C.D."/>
            <person name="Tschopp J."/>
            <person name="Browning J.L."/>
            <person name="Ambrose C."/>
        </authorList>
    </citation>
    <scope>NUCLEOTIDE SEQUENCE [MRNA] (ISOFORMS 1 AND 2)</scope>
    <source>
        <strain>BALB/cJ</strain>
        <tissue>B-cell lymphoma</tissue>
    </source>
</reference>
<reference key="2">
    <citation type="journal article" date="2001" name="Curr. Biol.">
        <title>Identification of a novel receptor for B lymphocyte stimulator that is mutated in a mouse strain with severe B cell deficiency.</title>
        <authorList>
            <person name="Yan M."/>
            <person name="Brady J.R."/>
            <person name="Chan B."/>
            <person name="Lee W.P."/>
            <person name="Hsu B."/>
            <person name="Harless S.M."/>
            <person name="Cancro M.P."/>
            <person name="Grewal I.S."/>
            <person name="Dixit V.M."/>
        </authorList>
    </citation>
    <scope>NUCLEOTIDE SEQUENCE [MRNA] (ISOFORM 1)</scope>
    <scope>DISEASE</scope>
    <source>
        <strain>A/J</strain>
    </source>
</reference>
<reference key="3">
    <citation type="journal article" date="2005" name="Science">
        <title>The transcriptional landscape of the mammalian genome.</title>
        <authorList>
            <person name="Carninci P."/>
            <person name="Kasukawa T."/>
            <person name="Katayama S."/>
            <person name="Gough J."/>
            <person name="Frith M.C."/>
            <person name="Maeda N."/>
            <person name="Oyama R."/>
            <person name="Ravasi T."/>
            <person name="Lenhard B."/>
            <person name="Wells C."/>
            <person name="Kodzius R."/>
            <person name="Shimokawa K."/>
            <person name="Bajic V.B."/>
            <person name="Brenner S.E."/>
            <person name="Batalov S."/>
            <person name="Forrest A.R."/>
            <person name="Zavolan M."/>
            <person name="Davis M.J."/>
            <person name="Wilming L.G."/>
            <person name="Aidinis V."/>
            <person name="Allen J.E."/>
            <person name="Ambesi-Impiombato A."/>
            <person name="Apweiler R."/>
            <person name="Aturaliya R.N."/>
            <person name="Bailey T.L."/>
            <person name="Bansal M."/>
            <person name="Baxter L."/>
            <person name="Beisel K.W."/>
            <person name="Bersano T."/>
            <person name="Bono H."/>
            <person name="Chalk A.M."/>
            <person name="Chiu K.P."/>
            <person name="Choudhary V."/>
            <person name="Christoffels A."/>
            <person name="Clutterbuck D.R."/>
            <person name="Crowe M.L."/>
            <person name="Dalla E."/>
            <person name="Dalrymple B.P."/>
            <person name="de Bono B."/>
            <person name="Della Gatta G."/>
            <person name="di Bernardo D."/>
            <person name="Down T."/>
            <person name="Engstrom P."/>
            <person name="Fagiolini M."/>
            <person name="Faulkner G."/>
            <person name="Fletcher C.F."/>
            <person name="Fukushima T."/>
            <person name="Furuno M."/>
            <person name="Futaki S."/>
            <person name="Gariboldi M."/>
            <person name="Georgii-Hemming P."/>
            <person name="Gingeras T.R."/>
            <person name="Gojobori T."/>
            <person name="Green R.E."/>
            <person name="Gustincich S."/>
            <person name="Harbers M."/>
            <person name="Hayashi Y."/>
            <person name="Hensch T.K."/>
            <person name="Hirokawa N."/>
            <person name="Hill D."/>
            <person name="Huminiecki L."/>
            <person name="Iacono M."/>
            <person name="Ikeo K."/>
            <person name="Iwama A."/>
            <person name="Ishikawa T."/>
            <person name="Jakt M."/>
            <person name="Kanapin A."/>
            <person name="Katoh M."/>
            <person name="Kawasawa Y."/>
            <person name="Kelso J."/>
            <person name="Kitamura H."/>
            <person name="Kitano H."/>
            <person name="Kollias G."/>
            <person name="Krishnan S.P."/>
            <person name="Kruger A."/>
            <person name="Kummerfeld S.K."/>
            <person name="Kurochkin I.V."/>
            <person name="Lareau L.F."/>
            <person name="Lazarevic D."/>
            <person name="Lipovich L."/>
            <person name="Liu J."/>
            <person name="Liuni S."/>
            <person name="McWilliam S."/>
            <person name="Madan Babu M."/>
            <person name="Madera M."/>
            <person name="Marchionni L."/>
            <person name="Matsuda H."/>
            <person name="Matsuzawa S."/>
            <person name="Miki H."/>
            <person name="Mignone F."/>
            <person name="Miyake S."/>
            <person name="Morris K."/>
            <person name="Mottagui-Tabar S."/>
            <person name="Mulder N."/>
            <person name="Nakano N."/>
            <person name="Nakauchi H."/>
            <person name="Ng P."/>
            <person name="Nilsson R."/>
            <person name="Nishiguchi S."/>
            <person name="Nishikawa S."/>
            <person name="Nori F."/>
            <person name="Ohara O."/>
            <person name="Okazaki Y."/>
            <person name="Orlando V."/>
            <person name="Pang K.C."/>
            <person name="Pavan W.J."/>
            <person name="Pavesi G."/>
            <person name="Pesole G."/>
            <person name="Petrovsky N."/>
            <person name="Piazza S."/>
            <person name="Reed J."/>
            <person name="Reid J.F."/>
            <person name="Ring B.Z."/>
            <person name="Ringwald M."/>
            <person name="Rost B."/>
            <person name="Ruan Y."/>
            <person name="Salzberg S.L."/>
            <person name="Sandelin A."/>
            <person name="Schneider C."/>
            <person name="Schoenbach C."/>
            <person name="Sekiguchi K."/>
            <person name="Semple C.A."/>
            <person name="Seno S."/>
            <person name="Sessa L."/>
            <person name="Sheng Y."/>
            <person name="Shibata Y."/>
            <person name="Shimada H."/>
            <person name="Shimada K."/>
            <person name="Silva D."/>
            <person name="Sinclair B."/>
            <person name="Sperling S."/>
            <person name="Stupka E."/>
            <person name="Sugiura K."/>
            <person name="Sultana R."/>
            <person name="Takenaka Y."/>
            <person name="Taki K."/>
            <person name="Tammoja K."/>
            <person name="Tan S.L."/>
            <person name="Tang S."/>
            <person name="Taylor M.S."/>
            <person name="Tegner J."/>
            <person name="Teichmann S.A."/>
            <person name="Ueda H.R."/>
            <person name="van Nimwegen E."/>
            <person name="Verardo R."/>
            <person name="Wei C.L."/>
            <person name="Yagi K."/>
            <person name="Yamanishi H."/>
            <person name="Zabarovsky E."/>
            <person name="Zhu S."/>
            <person name="Zimmer A."/>
            <person name="Hide W."/>
            <person name="Bult C."/>
            <person name="Grimmond S.M."/>
            <person name="Teasdale R.D."/>
            <person name="Liu E.T."/>
            <person name="Brusic V."/>
            <person name="Quackenbush J."/>
            <person name="Wahlestedt C."/>
            <person name="Mattick J.S."/>
            <person name="Hume D.A."/>
            <person name="Kai C."/>
            <person name="Sasaki D."/>
            <person name="Tomaru Y."/>
            <person name="Fukuda S."/>
            <person name="Kanamori-Katayama M."/>
            <person name="Suzuki M."/>
            <person name="Aoki J."/>
            <person name="Arakawa T."/>
            <person name="Iida J."/>
            <person name="Imamura K."/>
            <person name="Itoh M."/>
            <person name="Kato T."/>
            <person name="Kawaji H."/>
            <person name="Kawagashira N."/>
            <person name="Kawashima T."/>
            <person name="Kojima M."/>
            <person name="Kondo S."/>
            <person name="Konno H."/>
            <person name="Nakano K."/>
            <person name="Ninomiya N."/>
            <person name="Nishio T."/>
            <person name="Okada M."/>
            <person name="Plessy C."/>
            <person name="Shibata K."/>
            <person name="Shiraki T."/>
            <person name="Suzuki S."/>
            <person name="Tagami M."/>
            <person name="Waki K."/>
            <person name="Watahiki A."/>
            <person name="Okamura-Oho Y."/>
            <person name="Suzuki H."/>
            <person name="Kawai J."/>
            <person name="Hayashizaki Y."/>
        </authorList>
    </citation>
    <scope>NUCLEOTIDE SEQUENCE [LARGE SCALE MRNA] (ISOFORM 1)</scope>
    <source>
        <strain>C57BL/6J</strain>
        <tissue>Small intestine</tissue>
    </source>
</reference>
<reference key="4">
    <citation type="journal article" date="2001" name="Curr. Biol.">
        <title>Competition for BLyS-mediated signaling through Bcmd/BR3 regulates peripheral B lymphocyte numbers.</title>
        <authorList>
            <person name="Harless S.M."/>
            <person name="Lentz V.M."/>
            <person name="Sah A.P."/>
            <person name="Hsu B.L."/>
            <person name="Clise-Dwyer K."/>
            <person name="Hilbert D.M."/>
            <person name="Hayes C.E."/>
            <person name="Cancro M.P."/>
        </authorList>
    </citation>
    <scope>FUNCTION</scope>
</reference>
<reference key="5">
    <citation type="journal article" date="2010" name="Cell">
        <title>A tissue-specific atlas of mouse protein phosphorylation and expression.</title>
        <authorList>
            <person name="Huttlin E.L."/>
            <person name="Jedrychowski M.P."/>
            <person name="Elias J.E."/>
            <person name="Goswami T."/>
            <person name="Rad R."/>
            <person name="Beausoleil S.A."/>
            <person name="Villen J."/>
            <person name="Haas W."/>
            <person name="Sowa M.E."/>
            <person name="Gygi S.P."/>
        </authorList>
    </citation>
    <scope>IDENTIFICATION BY MASS SPECTROMETRY [LARGE SCALE ANALYSIS]</scope>
    <source>
        <tissue>Spleen</tissue>
    </source>
</reference>
<keyword id="KW-1064">Adaptive immunity</keyword>
<keyword id="KW-0025">Alternative splicing</keyword>
<keyword id="KW-1015">Disulfide bond</keyword>
<keyword id="KW-0325">Glycoprotein</keyword>
<keyword id="KW-0391">Immunity</keyword>
<keyword id="KW-0472">Membrane</keyword>
<keyword id="KW-0675">Receptor</keyword>
<keyword id="KW-1185">Reference proteome</keyword>
<keyword id="KW-0735">Signal-anchor</keyword>
<keyword id="KW-0812">Transmembrane</keyword>
<keyword id="KW-1133">Transmembrane helix</keyword>
<organism>
    <name type="scientific">Mus musculus</name>
    <name type="common">Mouse</name>
    <dbReference type="NCBI Taxonomy" id="10090"/>
    <lineage>
        <taxon>Eukaryota</taxon>
        <taxon>Metazoa</taxon>
        <taxon>Chordata</taxon>
        <taxon>Craniata</taxon>
        <taxon>Vertebrata</taxon>
        <taxon>Euteleostomi</taxon>
        <taxon>Mammalia</taxon>
        <taxon>Eutheria</taxon>
        <taxon>Euarchontoglires</taxon>
        <taxon>Glires</taxon>
        <taxon>Rodentia</taxon>
        <taxon>Myomorpha</taxon>
        <taxon>Muroidea</taxon>
        <taxon>Muridae</taxon>
        <taxon>Murinae</taxon>
        <taxon>Mus</taxon>
        <taxon>Mus</taxon>
    </lineage>
</organism>
<sequence>MGARRLRVRSQRSRDSSVPTQCNQTECFDPLVRNCVSCELFHTPDTGHTSSLEPGTALQPQEGSALRPDVALLVGAPALLGLILALTLVGLVSLVSWRWRQQLRTASPDTSEGVQQESLENVFVPSSETPHASAPTWPPLKEDADSALPRHSVPVPATELGSTELVTTKTAGPEQ</sequence>
<feature type="chain" id="PRO_0000058934" description="Tumor necrosis factor receptor superfamily member 13C">
    <location>
        <begin position="1"/>
        <end position="175"/>
    </location>
</feature>
<feature type="topological domain" description="Extracellular" evidence="2">
    <location>
        <begin position="1"/>
        <end position="71"/>
    </location>
</feature>
<feature type="transmembrane region" description="Helical; Signal-anchor for type III membrane protein" evidence="2">
    <location>
        <begin position="72"/>
        <end position="92"/>
    </location>
</feature>
<feature type="topological domain" description="Cytoplasmic" evidence="2">
    <location>
        <begin position="93"/>
        <end position="175"/>
    </location>
</feature>
<feature type="repeat" description="TNFR-Cys; truncated">
    <location>
        <begin position="21"/>
        <end position="38"/>
    </location>
</feature>
<feature type="region of interest" description="Essential for TNFSF13B/TALL1/BAFF/BLyS binding" evidence="1">
    <location>
        <begin position="29"/>
        <end position="34"/>
    </location>
</feature>
<feature type="region of interest" description="Disordered" evidence="3">
    <location>
        <begin position="124"/>
        <end position="175"/>
    </location>
</feature>
<feature type="compositionally biased region" description="Polar residues" evidence="3">
    <location>
        <begin position="160"/>
        <end position="175"/>
    </location>
</feature>
<feature type="glycosylation site" description="N-linked (GlcNAc...) asparagine" evidence="2">
    <location>
        <position position="23"/>
    </location>
</feature>
<feature type="disulfide bond" evidence="1">
    <location>
        <begin position="22"/>
        <end position="35"/>
    </location>
</feature>
<feature type="disulfide bond" evidence="1">
    <location>
        <begin position="27"/>
        <end position="38"/>
    </location>
</feature>
<feature type="splice variant" id="VSP_006506" description="In isoform 2." evidence="6">
    <location>
        <begin position="133"/>
        <end position="143"/>
    </location>
</feature>
<protein>
    <recommendedName>
        <fullName>Tumor necrosis factor receptor superfamily member 13C</fullName>
    </recommendedName>
    <alternativeName>
        <fullName>B-cell maturation defect</fullName>
    </alternativeName>
    <alternativeName>
        <fullName>B-cell-activating factor receptor</fullName>
    </alternativeName>
    <alternativeName>
        <fullName>BAFF receptor</fullName>
        <shortName>BAFF-R</shortName>
    </alternativeName>
    <alternativeName>
        <fullName>BLyS receptor 3</fullName>
    </alternativeName>
    <cdAntigenName>CD268</cdAntigenName>
</protein>
<dbReference type="EMBL" id="AF373847">
    <property type="protein sequence ID" value="AAK91827.1"/>
    <property type="molecule type" value="mRNA"/>
</dbReference>
<dbReference type="EMBL" id="AK008142">
    <property type="protein sequence ID" value="BAB25490.1"/>
    <property type="molecule type" value="mRNA"/>
</dbReference>
<dbReference type="CCDS" id="CCDS27684.1">
    <molecule id="Q9D8D0-1"/>
</dbReference>
<dbReference type="RefSeq" id="NP_082351.1">
    <molecule id="Q9D8D0-1"/>
    <property type="nucleotide sequence ID" value="NM_028075.3"/>
</dbReference>
<dbReference type="SMR" id="Q9D8D0"/>
<dbReference type="BioGRID" id="215117">
    <property type="interactions" value="3"/>
</dbReference>
<dbReference type="FunCoup" id="Q9D8D0">
    <property type="interactions" value="439"/>
</dbReference>
<dbReference type="STRING" id="10090.ENSMUSP00000086564"/>
<dbReference type="GlyCosmos" id="Q9D8D0">
    <property type="glycosylation" value="1 site, No reported glycans"/>
</dbReference>
<dbReference type="GlyGen" id="Q9D8D0">
    <property type="glycosylation" value="1 site"/>
</dbReference>
<dbReference type="iPTMnet" id="Q9D8D0"/>
<dbReference type="PhosphoSitePlus" id="Q9D8D0"/>
<dbReference type="ProteomicsDB" id="259179">
    <molecule id="Q9D8D0-1"/>
</dbReference>
<dbReference type="ProteomicsDB" id="259180">
    <molecule id="Q9D8D0-2"/>
</dbReference>
<dbReference type="Antibodypedia" id="307">
    <property type="antibodies" value="723 antibodies from 44 providers"/>
</dbReference>
<dbReference type="DNASU" id="72049"/>
<dbReference type="Ensembl" id="ENSMUST00000089161.10">
    <molecule id="Q9D8D0-1"/>
    <property type="protein sequence ID" value="ENSMUSP00000086564.3"/>
    <property type="gene ID" value="ENSMUSG00000068105.12"/>
</dbReference>
<dbReference type="GeneID" id="72049"/>
<dbReference type="KEGG" id="mmu:72049"/>
<dbReference type="UCSC" id="uc007wyj.1">
    <molecule id="Q9D8D0-1"/>
    <property type="organism name" value="mouse"/>
</dbReference>
<dbReference type="AGR" id="MGI:1919299"/>
<dbReference type="CTD" id="115650"/>
<dbReference type="MGI" id="MGI:1919299">
    <property type="gene designation" value="Tnfrsf13c"/>
</dbReference>
<dbReference type="VEuPathDB" id="HostDB:ENSMUSG00000068105"/>
<dbReference type="GeneTree" id="ENSGT00940000154485"/>
<dbReference type="InParanoid" id="Q9D8D0"/>
<dbReference type="OMA" id="RPCCQGD"/>
<dbReference type="OrthoDB" id="82807at9989"/>
<dbReference type="PhylomeDB" id="Q9D8D0"/>
<dbReference type="Reactome" id="R-MMU-5668541">
    <property type="pathway name" value="TNFR2 non-canonical NF-kB pathway"/>
</dbReference>
<dbReference type="Reactome" id="R-MMU-5676594">
    <property type="pathway name" value="TNF receptor superfamily (TNFSF) members mediating non-canonical NF-kB pathway"/>
</dbReference>
<dbReference type="BioGRID-ORCS" id="72049">
    <property type="hits" value="3 hits in 79 CRISPR screens"/>
</dbReference>
<dbReference type="ChiTaRS" id="Tnfrsf13c">
    <property type="organism name" value="mouse"/>
</dbReference>
<dbReference type="PRO" id="PR:Q9D8D0"/>
<dbReference type="Proteomes" id="UP000000589">
    <property type="component" value="Chromosome 15"/>
</dbReference>
<dbReference type="RNAct" id="Q9D8D0">
    <property type="molecule type" value="protein"/>
</dbReference>
<dbReference type="Bgee" id="ENSMUSG00000068105">
    <property type="expression patterns" value="Expressed in mesenteric lymph node and 85 other cell types or tissues"/>
</dbReference>
<dbReference type="ExpressionAtlas" id="Q9D8D0">
    <property type="expression patterns" value="baseline and differential"/>
</dbReference>
<dbReference type="GO" id="GO:0009897">
    <property type="term" value="C:external side of plasma membrane"/>
    <property type="evidence" value="ECO:0000314"/>
    <property type="project" value="MGI"/>
</dbReference>
<dbReference type="GO" id="GO:0016020">
    <property type="term" value="C:membrane"/>
    <property type="evidence" value="ECO:0000266"/>
    <property type="project" value="MGI"/>
</dbReference>
<dbReference type="GO" id="GO:0038023">
    <property type="term" value="F:signaling receptor activity"/>
    <property type="evidence" value="ECO:0007669"/>
    <property type="project" value="InterPro"/>
</dbReference>
<dbReference type="GO" id="GO:0031296">
    <property type="term" value="P:B cell costimulation"/>
    <property type="evidence" value="ECO:0000314"/>
    <property type="project" value="MGI"/>
</dbReference>
<dbReference type="GO" id="GO:0001782">
    <property type="term" value="P:B cell homeostasis"/>
    <property type="evidence" value="ECO:0000315"/>
    <property type="project" value="MGI"/>
</dbReference>
<dbReference type="GO" id="GO:0042100">
    <property type="term" value="P:B cell proliferation"/>
    <property type="evidence" value="ECO:0000314"/>
    <property type="project" value="MGI"/>
</dbReference>
<dbReference type="GO" id="GO:0002467">
    <property type="term" value="P:germinal center formation"/>
    <property type="evidence" value="ECO:0000315"/>
    <property type="project" value="MGI"/>
</dbReference>
<dbReference type="GO" id="GO:0030890">
    <property type="term" value="P:positive regulation of B cell proliferation"/>
    <property type="evidence" value="ECO:0000314"/>
    <property type="project" value="MGI"/>
</dbReference>
<dbReference type="GO" id="GO:0002636">
    <property type="term" value="P:positive regulation of germinal center formation"/>
    <property type="evidence" value="ECO:0000315"/>
    <property type="project" value="MGI"/>
</dbReference>
<dbReference type="GO" id="GO:0042102">
    <property type="term" value="P:positive regulation of T cell proliferation"/>
    <property type="evidence" value="ECO:0000314"/>
    <property type="project" value="MGI"/>
</dbReference>
<dbReference type="GO" id="GO:0032729">
    <property type="term" value="P:positive regulation of type II interferon production"/>
    <property type="evidence" value="ECO:0000315"/>
    <property type="project" value="MGI"/>
</dbReference>
<dbReference type="GO" id="GO:0050776">
    <property type="term" value="P:regulation of immune response"/>
    <property type="evidence" value="ECO:0000315"/>
    <property type="project" value="MGI"/>
</dbReference>
<dbReference type="GO" id="GO:0031295">
    <property type="term" value="P:T cell costimulation"/>
    <property type="evidence" value="ECO:0000314"/>
    <property type="project" value="MGI"/>
</dbReference>
<dbReference type="GO" id="GO:0042098">
    <property type="term" value="P:T cell proliferation"/>
    <property type="evidence" value="ECO:0000314"/>
    <property type="project" value="MGI"/>
</dbReference>
<dbReference type="GO" id="GO:0033209">
    <property type="term" value="P:tumor necrosis factor-mediated signaling pathway"/>
    <property type="evidence" value="ECO:0007669"/>
    <property type="project" value="InterPro"/>
</dbReference>
<dbReference type="InterPro" id="IPR022338">
    <property type="entry name" value="TNFR_13C"/>
</dbReference>
<dbReference type="InterPro" id="IPR043521">
    <property type="entry name" value="TNFR_13C/17"/>
</dbReference>
<dbReference type="InterPro" id="IPR015336">
    <property type="entry name" value="TNFR_13C_TALL-1-bd"/>
</dbReference>
<dbReference type="PANTHER" id="PTHR20437">
    <property type="entry name" value="TUMOR NECROSIS FACTOR RECEPTOR SUBFAMILY MEMBER 13/17"/>
    <property type="match status" value="1"/>
</dbReference>
<dbReference type="PANTHER" id="PTHR20437:SF2">
    <property type="entry name" value="TUMOR NECROSIS FACTOR RECEPTOR SUPERFAMILY MEMBER 13C"/>
    <property type="match status" value="1"/>
</dbReference>
<dbReference type="Pfam" id="PF09256">
    <property type="entry name" value="BaffR-Tall_bind"/>
    <property type="match status" value="1"/>
</dbReference>
<dbReference type="PRINTS" id="PR01964">
    <property type="entry name" value="TNFACTORR13C"/>
</dbReference>
<dbReference type="SUPFAM" id="SSF57586">
    <property type="entry name" value="TNF receptor-like"/>
    <property type="match status" value="1"/>
</dbReference>
<accession>Q9D8D0</accession>
<proteinExistence type="evidence at protein level"/>
<evidence type="ECO:0000250" key="1"/>
<evidence type="ECO:0000255" key="2"/>
<evidence type="ECO:0000256" key="3">
    <source>
        <dbReference type="SAM" id="MobiDB-lite"/>
    </source>
</evidence>
<evidence type="ECO:0000269" key="4">
    <source>
    </source>
</evidence>
<evidence type="ECO:0000269" key="5">
    <source>
    </source>
</evidence>
<evidence type="ECO:0000303" key="6">
    <source>
    </source>
</evidence>
<evidence type="ECO:0000305" key="7"/>